<name>RL19_BUCBP</name>
<evidence type="ECO:0000255" key="1">
    <source>
        <dbReference type="HAMAP-Rule" id="MF_00402"/>
    </source>
</evidence>
<evidence type="ECO:0000305" key="2"/>
<reference key="1">
    <citation type="journal article" date="2003" name="Proc. Natl. Acad. Sci. U.S.A.">
        <title>Reductive genome evolution in Buchnera aphidicola.</title>
        <authorList>
            <person name="van Ham R.C.H.J."/>
            <person name="Kamerbeek J."/>
            <person name="Palacios C."/>
            <person name="Rausell C."/>
            <person name="Abascal F."/>
            <person name="Bastolla U."/>
            <person name="Fernandez J.M."/>
            <person name="Jimenez L."/>
            <person name="Postigo M."/>
            <person name="Silva F.J."/>
            <person name="Tamames J."/>
            <person name="Viguera E."/>
            <person name="Latorre A."/>
            <person name="Valencia A."/>
            <person name="Moran F."/>
            <person name="Moya A."/>
        </authorList>
    </citation>
    <scope>NUCLEOTIDE SEQUENCE [LARGE SCALE GENOMIC DNA]</scope>
    <source>
        <strain>Bp</strain>
    </source>
</reference>
<protein>
    <recommendedName>
        <fullName evidence="1">Large ribosomal subunit protein bL19</fullName>
    </recommendedName>
    <alternativeName>
        <fullName evidence="2">50S ribosomal protein L19</fullName>
    </alternativeName>
</protein>
<keyword id="KW-1185">Reference proteome</keyword>
<keyword id="KW-0687">Ribonucleoprotein</keyword>
<keyword id="KW-0689">Ribosomal protein</keyword>
<organism>
    <name type="scientific">Buchnera aphidicola subsp. Baizongia pistaciae (strain Bp)</name>
    <dbReference type="NCBI Taxonomy" id="224915"/>
    <lineage>
        <taxon>Bacteria</taxon>
        <taxon>Pseudomonadati</taxon>
        <taxon>Pseudomonadota</taxon>
        <taxon>Gammaproteobacteria</taxon>
        <taxon>Enterobacterales</taxon>
        <taxon>Erwiniaceae</taxon>
        <taxon>Buchnera</taxon>
    </lineage>
</organism>
<sequence length="118" mass="13773">MNYIQKYEKKQIKKTIPIFKSGDTIIIKVWIVEGTKKRIQLFEGIVIAIRNRGFNSSFCVRKVSNGEGIERVFPKYSPIIEEIIVKRHGDVKKSKLYYLRNRIGKSAKIRELISKKTS</sequence>
<accession>Q89AE2</accession>
<dbReference type="EMBL" id="AE016826">
    <property type="protein sequence ID" value="AAO27079.1"/>
    <property type="molecule type" value="Genomic_DNA"/>
</dbReference>
<dbReference type="RefSeq" id="WP_011091480.1">
    <property type="nucleotide sequence ID" value="NC_004545.1"/>
</dbReference>
<dbReference type="SMR" id="Q89AE2"/>
<dbReference type="STRING" id="224915.bbp_360"/>
<dbReference type="KEGG" id="bab:bbp_360"/>
<dbReference type="eggNOG" id="COG0335">
    <property type="taxonomic scope" value="Bacteria"/>
</dbReference>
<dbReference type="HOGENOM" id="CLU_103507_2_2_6"/>
<dbReference type="OrthoDB" id="9803541at2"/>
<dbReference type="Proteomes" id="UP000000601">
    <property type="component" value="Chromosome"/>
</dbReference>
<dbReference type="GO" id="GO:0022625">
    <property type="term" value="C:cytosolic large ribosomal subunit"/>
    <property type="evidence" value="ECO:0007669"/>
    <property type="project" value="TreeGrafter"/>
</dbReference>
<dbReference type="GO" id="GO:0003735">
    <property type="term" value="F:structural constituent of ribosome"/>
    <property type="evidence" value="ECO:0007669"/>
    <property type="project" value="InterPro"/>
</dbReference>
<dbReference type="GO" id="GO:0006412">
    <property type="term" value="P:translation"/>
    <property type="evidence" value="ECO:0007669"/>
    <property type="project" value="UniProtKB-UniRule"/>
</dbReference>
<dbReference type="FunFam" id="2.30.30.790:FF:000001">
    <property type="entry name" value="50S ribosomal protein L19"/>
    <property type="match status" value="1"/>
</dbReference>
<dbReference type="Gene3D" id="2.30.30.790">
    <property type="match status" value="1"/>
</dbReference>
<dbReference type="HAMAP" id="MF_00402">
    <property type="entry name" value="Ribosomal_bL19"/>
    <property type="match status" value="1"/>
</dbReference>
<dbReference type="InterPro" id="IPR001857">
    <property type="entry name" value="Ribosomal_bL19"/>
</dbReference>
<dbReference type="InterPro" id="IPR018257">
    <property type="entry name" value="Ribosomal_bL19_CS"/>
</dbReference>
<dbReference type="InterPro" id="IPR038657">
    <property type="entry name" value="Ribosomal_bL19_sf"/>
</dbReference>
<dbReference type="InterPro" id="IPR008991">
    <property type="entry name" value="Translation_prot_SH3-like_sf"/>
</dbReference>
<dbReference type="NCBIfam" id="TIGR01024">
    <property type="entry name" value="rplS_bact"/>
    <property type="match status" value="1"/>
</dbReference>
<dbReference type="PANTHER" id="PTHR15680:SF9">
    <property type="entry name" value="LARGE RIBOSOMAL SUBUNIT PROTEIN BL19M"/>
    <property type="match status" value="1"/>
</dbReference>
<dbReference type="PANTHER" id="PTHR15680">
    <property type="entry name" value="RIBOSOMAL PROTEIN L19"/>
    <property type="match status" value="1"/>
</dbReference>
<dbReference type="Pfam" id="PF01245">
    <property type="entry name" value="Ribosomal_L19"/>
    <property type="match status" value="1"/>
</dbReference>
<dbReference type="PIRSF" id="PIRSF002191">
    <property type="entry name" value="Ribosomal_L19"/>
    <property type="match status" value="1"/>
</dbReference>
<dbReference type="PRINTS" id="PR00061">
    <property type="entry name" value="RIBOSOMALL19"/>
</dbReference>
<dbReference type="SUPFAM" id="SSF50104">
    <property type="entry name" value="Translation proteins SH3-like domain"/>
    <property type="match status" value="1"/>
</dbReference>
<dbReference type="PROSITE" id="PS01015">
    <property type="entry name" value="RIBOSOMAL_L19"/>
    <property type="match status" value="1"/>
</dbReference>
<proteinExistence type="inferred from homology"/>
<comment type="function">
    <text evidence="1">This protein is located at the 30S-50S ribosomal subunit interface and may play a role in the structure and function of the aminoacyl-tRNA binding site.</text>
</comment>
<comment type="similarity">
    <text evidence="1">Belongs to the bacterial ribosomal protein bL19 family.</text>
</comment>
<feature type="chain" id="PRO_0000163428" description="Large ribosomal subunit protein bL19">
    <location>
        <begin position="1"/>
        <end position="118"/>
    </location>
</feature>
<gene>
    <name evidence="1" type="primary">rplS</name>
    <name type="ordered locus">bbp_360</name>
</gene>